<keyword id="KW-0067">ATP-binding</keyword>
<keyword id="KW-0347">Helicase</keyword>
<keyword id="KW-0378">Hydrolase</keyword>
<keyword id="KW-0547">Nucleotide-binding</keyword>
<keyword id="KW-1185">Reference proteome</keyword>
<keyword id="KW-0694">RNA-binding</keyword>
<keyword id="KW-0804">Transcription</keyword>
<keyword id="KW-0805">Transcription regulation</keyword>
<keyword id="KW-0806">Transcription termination</keyword>
<proteinExistence type="inferred from homology"/>
<protein>
    <recommendedName>
        <fullName evidence="1">Transcription termination factor Rho</fullName>
        <ecNumber evidence="1">3.6.4.-</ecNumber>
    </recommendedName>
    <alternativeName>
        <fullName evidence="1">ATP-dependent helicase Rho</fullName>
    </alternativeName>
</protein>
<gene>
    <name evidence="1" type="primary">rho</name>
    <name type="ordered locus">RB4997</name>
</gene>
<name>RHO_RHOBA</name>
<evidence type="ECO:0000255" key="1">
    <source>
        <dbReference type="HAMAP-Rule" id="MF_01884"/>
    </source>
</evidence>
<evidence type="ECO:0000255" key="2">
    <source>
        <dbReference type="PROSITE-ProRule" id="PRU01203"/>
    </source>
</evidence>
<evidence type="ECO:0000256" key="3">
    <source>
        <dbReference type="SAM" id="MobiDB-lite"/>
    </source>
</evidence>
<dbReference type="EC" id="3.6.4.-" evidence="1"/>
<dbReference type="EMBL" id="BX294141">
    <property type="protein sequence ID" value="CAD78229.1"/>
    <property type="molecule type" value="Genomic_DNA"/>
</dbReference>
<dbReference type="RefSeq" id="NP_866448.1">
    <property type="nucleotide sequence ID" value="NC_005027.1"/>
</dbReference>
<dbReference type="SMR" id="Q7UGV0"/>
<dbReference type="FunCoup" id="Q7UGV0">
    <property type="interactions" value="489"/>
</dbReference>
<dbReference type="STRING" id="243090.RB4997"/>
<dbReference type="EnsemblBacteria" id="CAD78229">
    <property type="protein sequence ID" value="CAD78229"/>
    <property type="gene ID" value="RB4997"/>
</dbReference>
<dbReference type="KEGG" id="rba:RB4997"/>
<dbReference type="PATRIC" id="fig|243090.15.peg.2389"/>
<dbReference type="eggNOG" id="COG1158">
    <property type="taxonomic scope" value="Bacteria"/>
</dbReference>
<dbReference type="HOGENOM" id="CLU_016377_4_3_0"/>
<dbReference type="InParanoid" id="Q7UGV0"/>
<dbReference type="OrthoDB" id="9805197at2"/>
<dbReference type="Proteomes" id="UP000001025">
    <property type="component" value="Chromosome"/>
</dbReference>
<dbReference type="GO" id="GO:0005524">
    <property type="term" value="F:ATP binding"/>
    <property type="evidence" value="ECO:0007669"/>
    <property type="project" value="UniProtKB-UniRule"/>
</dbReference>
<dbReference type="GO" id="GO:0016887">
    <property type="term" value="F:ATP hydrolysis activity"/>
    <property type="evidence" value="ECO:0007669"/>
    <property type="project" value="InterPro"/>
</dbReference>
<dbReference type="GO" id="GO:0008186">
    <property type="term" value="F:ATP-dependent activity, acting on RNA"/>
    <property type="evidence" value="ECO:0007669"/>
    <property type="project" value="InterPro"/>
</dbReference>
<dbReference type="GO" id="GO:0004386">
    <property type="term" value="F:helicase activity"/>
    <property type="evidence" value="ECO:0007669"/>
    <property type="project" value="UniProtKB-UniRule"/>
</dbReference>
<dbReference type="GO" id="GO:0003723">
    <property type="term" value="F:RNA binding"/>
    <property type="evidence" value="ECO:0007669"/>
    <property type="project" value="UniProtKB-UniRule"/>
</dbReference>
<dbReference type="GO" id="GO:0006353">
    <property type="term" value="P:DNA-templated transcription termination"/>
    <property type="evidence" value="ECO:0000318"/>
    <property type="project" value="GO_Central"/>
</dbReference>
<dbReference type="CDD" id="cd04459">
    <property type="entry name" value="Rho_CSD"/>
    <property type="match status" value="1"/>
</dbReference>
<dbReference type="CDD" id="cd01128">
    <property type="entry name" value="rho_factor_C"/>
    <property type="match status" value="1"/>
</dbReference>
<dbReference type="Gene3D" id="2.40.50.140">
    <property type="entry name" value="Nucleic acid-binding proteins"/>
    <property type="match status" value="1"/>
</dbReference>
<dbReference type="Gene3D" id="3.40.50.300">
    <property type="entry name" value="P-loop containing nucleotide triphosphate hydrolases"/>
    <property type="match status" value="1"/>
</dbReference>
<dbReference type="HAMAP" id="MF_01884">
    <property type="entry name" value="Rho"/>
    <property type="match status" value="1"/>
</dbReference>
<dbReference type="InterPro" id="IPR003593">
    <property type="entry name" value="AAA+_ATPase"/>
</dbReference>
<dbReference type="InterPro" id="IPR000194">
    <property type="entry name" value="ATPase_F1/V1/A1_a/bsu_nucl-bd"/>
</dbReference>
<dbReference type="InterPro" id="IPR011129">
    <property type="entry name" value="CSD"/>
</dbReference>
<dbReference type="InterPro" id="IPR012340">
    <property type="entry name" value="NA-bd_OB-fold"/>
</dbReference>
<dbReference type="InterPro" id="IPR027417">
    <property type="entry name" value="P-loop_NTPase"/>
</dbReference>
<dbReference type="InterPro" id="IPR011112">
    <property type="entry name" value="Rho-like_N"/>
</dbReference>
<dbReference type="InterPro" id="IPR041703">
    <property type="entry name" value="Rho_factor_ATP-bd"/>
</dbReference>
<dbReference type="InterPro" id="IPR036269">
    <property type="entry name" value="Rho_N_sf"/>
</dbReference>
<dbReference type="InterPro" id="IPR011113">
    <property type="entry name" value="Rho_RNA-bd"/>
</dbReference>
<dbReference type="InterPro" id="IPR004665">
    <property type="entry name" value="Term_rho"/>
</dbReference>
<dbReference type="NCBIfam" id="NF006886">
    <property type="entry name" value="PRK09376.1"/>
    <property type="match status" value="1"/>
</dbReference>
<dbReference type="NCBIfam" id="TIGR00767">
    <property type="entry name" value="rho"/>
    <property type="match status" value="1"/>
</dbReference>
<dbReference type="PANTHER" id="PTHR46425">
    <property type="entry name" value="TRANSCRIPTION TERMINATION FACTOR RHO"/>
    <property type="match status" value="1"/>
</dbReference>
<dbReference type="PANTHER" id="PTHR46425:SF1">
    <property type="entry name" value="TRANSCRIPTION TERMINATION FACTOR RHO"/>
    <property type="match status" value="1"/>
</dbReference>
<dbReference type="Pfam" id="PF00006">
    <property type="entry name" value="ATP-synt_ab"/>
    <property type="match status" value="1"/>
</dbReference>
<dbReference type="Pfam" id="PF07497">
    <property type="entry name" value="Rho_RNA_bind"/>
    <property type="match status" value="1"/>
</dbReference>
<dbReference type="SMART" id="SM00382">
    <property type="entry name" value="AAA"/>
    <property type="match status" value="1"/>
</dbReference>
<dbReference type="SMART" id="SM00357">
    <property type="entry name" value="CSP"/>
    <property type="match status" value="1"/>
</dbReference>
<dbReference type="SMART" id="SM00959">
    <property type="entry name" value="Rho_N"/>
    <property type="match status" value="1"/>
</dbReference>
<dbReference type="SUPFAM" id="SSF50249">
    <property type="entry name" value="Nucleic acid-binding proteins"/>
    <property type="match status" value="1"/>
</dbReference>
<dbReference type="SUPFAM" id="SSF52540">
    <property type="entry name" value="P-loop containing nucleoside triphosphate hydrolases"/>
    <property type="match status" value="1"/>
</dbReference>
<dbReference type="SUPFAM" id="SSF68912">
    <property type="entry name" value="Rho N-terminal domain-like"/>
    <property type="match status" value="1"/>
</dbReference>
<dbReference type="PROSITE" id="PS51856">
    <property type="entry name" value="RHO_RNA_BD"/>
    <property type="match status" value="1"/>
</dbReference>
<organism>
    <name type="scientific">Rhodopirellula baltica (strain DSM 10527 / NCIMB 13988 / SH1)</name>
    <dbReference type="NCBI Taxonomy" id="243090"/>
    <lineage>
        <taxon>Bacteria</taxon>
        <taxon>Pseudomonadati</taxon>
        <taxon>Planctomycetota</taxon>
        <taxon>Planctomycetia</taxon>
        <taxon>Pirellulales</taxon>
        <taxon>Pirellulaceae</taxon>
        <taxon>Rhodopirellula</taxon>
    </lineage>
</organism>
<reference key="1">
    <citation type="journal article" date="2003" name="Proc. Natl. Acad. Sci. U.S.A.">
        <title>Complete genome sequence of the marine planctomycete Pirellula sp. strain 1.</title>
        <authorList>
            <person name="Gloeckner F.O."/>
            <person name="Kube M."/>
            <person name="Bauer M."/>
            <person name="Teeling H."/>
            <person name="Lombardot T."/>
            <person name="Ludwig W."/>
            <person name="Gade D."/>
            <person name="Beck A."/>
            <person name="Borzym K."/>
            <person name="Heitmann K."/>
            <person name="Rabus R."/>
            <person name="Schlesner H."/>
            <person name="Amann R."/>
            <person name="Reinhardt R."/>
        </authorList>
    </citation>
    <scope>NUCLEOTIDE SEQUENCE [LARGE SCALE GENOMIC DNA]</scope>
    <source>
        <strain>DSM 10527 / NCIMB 13988 / SH1</strain>
    </source>
</reference>
<feature type="chain" id="PRO_0000398671" description="Transcription termination factor Rho">
    <location>
        <begin position="1"/>
        <end position="514"/>
    </location>
</feature>
<feature type="domain" description="Rho RNA-BD" evidence="2">
    <location>
        <begin position="141"/>
        <end position="216"/>
    </location>
</feature>
<feature type="region of interest" description="Disordered" evidence="3">
    <location>
        <begin position="25"/>
        <end position="52"/>
    </location>
</feature>
<feature type="compositionally biased region" description="Basic residues" evidence="3">
    <location>
        <begin position="35"/>
        <end position="45"/>
    </location>
</feature>
<feature type="binding site" evidence="1">
    <location>
        <begin position="259"/>
        <end position="264"/>
    </location>
    <ligand>
        <name>ATP</name>
        <dbReference type="ChEBI" id="CHEBI:30616"/>
    </ligand>
</feature>
<feature type="binding site" evidence="1">
    <location>
        <begin position="271"/>
        <end position="276"/>
    </location>
    <ligand>
        <name>ATP</name>
        <dbReference type="ChEBI" id="CHEBI:30616"/>
    </ligand>
</feature>
<feature type="binding site" evidence="1">
    <location>
        <position position="302"/>
    </location>
    <ligand>
        <name>ATP</name>
        <dbReference type="ChEBI" id="CHEBI:30616"/>
    </ligand>
</feature>
<comment type="function">
    <text evidence="1">Facilitates transcription termination by a mechanism that involves Rho binding to the nascent RNA, activation of Rho's RNA-dependent ATPase activity, and release of the mRNA from the DNA template.</text>
</comment>
<comment type="subunit">
    <text evidence="1">Homohexamer. The homohexamer assembles into an open ring structure.</text>
</comment>
<comment type="similarity">
    <text evidence="1">Belongs to the Rho family.</text>
</comment>
<sequence>MHPSRMALIRPPLFSSYRFGSLLMEPSSTPGPARNARRSNRRMRHPDKDVDKRVRELDAERDPLSLPEEIVSEVTRAGGRVGIPAKDQSPKQALNINDLQKLEHDELLALAETEGLQEIAALPRQELVFRLLKARMSANGLMYGEGTLEILPDGFGFLRSAQYHYLSCPDDIYVSPSQIRRFGLHTGSHVAGQIRPPKENERYFALLRIEAINHADPMQRQRQKPFDDLTPLHPRTRIVTEHDSQELSTRVVDLFTPIGFGQRGLIVSPPRAGKTMLMQSLARGVLNNYPDAYVVVLLIDERPEEVTDMEREIQSPQCEVISSTFDEPPARHIQVAQMVVEKAKRMVESGTDVVIFLDSITRLARAFNSDSDSATGKLLTGGLDAGAMQKPKSIFGSARKVEEGGSLTILATALVDTGSRMDDVIFEEFKGTGNLEIVLDQDLVARRVWPAIDLTRSGTRREEMLLDQEEHRRIETLRRDLAEHSPVDSMTELIKRMRKTQNNAEFLMSVHPQD</sequence>
<accession>Q7UGV0</accession>